<proteinExistence type="evidence at protein level"/>
<evidence type="ECO:0000250" key="1"/>
<evidence type="ECO:0000269" key="2">
    <source>
    </source>
</evidence>
<evidence type="ECO:0000305" key="3"/>
<accession>O51363</accession>
<dbReference type="EC" id="6.1.1.15"/>
<dbReference type="EMBL" id="AE000783">
    <property type="protein sequence ID" value="AAC66767.1"/>
    <property type="molecule type" value="Genomic_DNA"/>
</dbReference>
<dbReference type="PIR" id="A70150">
    <property type="entry name" value="A70150"/>
</dbReference>
<dbReference type="RefSeq" id="NP_212536.1">
    <property type="nucleotide sequence ID" value="NC_001318.1"/>
</dbReference>
<dbReference type="RefSeq" id="WP_010889744.1">
    <property type="nucleotide sequence ID" value="NC_001318.1"/>
</dbReference>
<dbReference type="SMR" id="O51363"/>
<dbReference type="STRING" id="224326.BB_0402"/>
<dbReference type="PaxDb" id="224326-BB_0402"/>
<dbReference type="EnsemblBacteria" id="AAC66767">
    <property type="protein sequence ID" value="AAC66767"/>
    <property type="gene ID" value="BB_0402"/>
</dbReference>
<dbReference type="KEGG" id="bbu:BB_0402"/>
<dbReference type="PATRIC" id="fig|224326.49.peg.796"/>
<dbReference type="HOGENOM" id="CLU_001882_4_2_12"/>
<dbReference type="OrthoDB" id="9809052at2"/>
<dbReference type="SABIO-RK" id="O51363"/>
<dbReference type="Proteomes" id="UP000001807">
    <property type="component" value="Chromosome"/>
</dbReference>
<dbReference type="GO" id="GO:0017101">
    <property type="term" value="C:aminoacyl-tRNA synthetase multienzyme complex"/>
    <property type="evidence" value="ECO:0007669"/>
    <property type="project" value="TreeGrafter"/>
</dbReference>
<dbReference type="GO" id="GO:0005737">
    <property type="term" value="C:cytoplasm"/>
    <property type="evidence" value="ECO:0007669"/>
    <property type="project" value="UniProtKB-SubCell"/>
</dbReference>
<dbReference type="GO" id="GO:0005524">
    <property type="term" value="F:ATP binding"/>
    <property type="evidence" value="ECO:0007669"/>
    <property type="project" value="UniProtKB-UniRule"/>
</dbReference>
<dbReference type="GO" id="GO:0004827">
    <property type="term" value="F:proline-tRNA ligase activity"/>
    <property type="evidence" value="ECO:0007669"/>
    <property type="project" value="UniProtKB-UniRule"/>
</dbReference>
<dbReference type="GO" id="GO:0006433">
    <property type="term" value="P:prolyl-tRNA aminoacylation"/>
    <property type="evidence" value="ECO:0007669"/>
    <property type="project" value="UniProtKB-UniRule"/>
</dbReference>
<dbReference type="CDD" id="cd00862">
    <property type="entry name" value="ProRS_anticodon_zinc"/>
    <property type="match status" value="1"/>
</dbReference>
<dbReference type="CDD" id="cd00778">
    <property type="entry name" value="ProRS_core_arch_euk"/>
    <property type="match status" value="1"/>
</dbReference>
<dbReference type="FunFam" id="3.30.930.10:FF:000023">
    <property type="entry name" value="Proline--tRNA ligase"/>
    <property type="match status" value="1"/>
</dbReference>
<dbReference type="Gene3D" id="3.40.50.800">
    <property type="entry name" value="Anticodon-binding domain"/>
    <property type="match status" value="1"/>
</dbReference>
<dbReference type="Gene3D" id="3.30.930.10">
    <property type="entry name" value="Bira Bifunctional Protein, Domain 2"/>
    <property type="match status" value="1"/>
</dbReference>
<dbReference type="Gene3D" id="3.30.110.30">
    <property type="entry name" value="C-terminal domain of ProRS"/>
    <property type="match status" value="1"/>
</dbReference>
<dbReference type="HAMAP" id="MF_01571">
    <property type="entry name" value="Pro_tRNA_synth_type3"/>
    <property type="match status" value="1"/>
</dbReference>
<dbReference type="InterPro" id="IPR002314">
    <property type="entry name" value="aa-tRNA-synt_IIb"/>
</dbReference>
<dbReference type="InterPro" id="IPR006195">
    <property type="entry name" value="aa-tRNA-synth_II"/>
</dbReference>
<dbReference type="InterPro" id="IPR045864">
    <property type="entry name" value="aa-tRNA-synth_II/BPL/LPL"/>
</dbReference>
<dbReference type="InterPro" id="IPR004154">
    <property type="entry name" value="Anticodon-bd"/>
</dbReference>
<dbReference type="InterPro" id="IPR036621">
    <property type="entry name" value="Anticodon-bd_dom_sf"/>
</dbReference>
<dbReference type="InterPro" id="IPR002316">
    <property type="entry name" value="Pro-tRNA-ligase_IIa"/>
</dbReference>
<dbReference type="InterPro" id="IPR004499">
    <property type="entry name" value="Pro-tRNA-ligase_IIa_arc-type"/>
</dbReference>
<dbReference type="InterPro" id="IPR016061">
    <property type="entry name" value="Pro-tRNA_ligase_II_C"/>
</dbReference>
<dbReference type="InterPro" id="IPR017449">
    <property type="entry name" value="Pro-tRNA_synth_II"/>
</dbReference>
<dbReference type="InterPro" id="IPR033721">
    <property type="entry name" value="ProRS_core_arch_euk"/>
</dbReference>
<dbReference type="NCBIfam" id="TIGR00408">
    <property type="entry name" value="proS_fam_I"/>
    <property type="match status" value="1"/>
</dbReference>
<dbReference type="PANTHER" id="PTHR43382:SF2">
    <property type="entry name" value="BIFUNCTIONAL GLUTAMATE_PROLINE--TRNA LIGASE"/>
    <property type="match status" value="1"/>
</dbReference>
<dbReference type="PANTHER" id="PTHR43382">
    <property type="entry name" value="PROLYL-TRNA SYNTHETASE"/>
    <property type="match status" value="1"/>
</dbReference>
<dbReference type="Pfam" id="PF03129">
    <property type="entry name" value="HGTP_anticodon"/>
    <property type="match status" value="1"/>
</dbReference>
<dbReference type="Pfam" id="PF09180">
    <property type="entry name" value="ProRS-C_1"/>
    <property type="match status" value="1"/>
</dbReference>
<dbReference type="Pfam" id="PF00587">
    <property type="entry name" value="tRNA-synt_2b"/>
    <property type="match status" value="1"/>
</dbReference>
<dbReference type="PRINTS" id="PR01046">
    <property type="entry name" value="TRNASYNTHPRO"/>
</dbReference>
<dbReference type="SMART" id="SM00946">
    <property type="entry name" value="ProRS-C_1"/>
    <property type="match status" value="1"/>
</dbReference>
<dbReference type="SUPFAM" id="SSF64586">
    <property type="entry name" value="C-terminal domain of ProRS"/>
    <property type="match status" value="1"/>
</dbReference>
<dbReference type="SUPFAM" id="SSF52954">
    <property type="entry name" value="Class II aaRS ABD-related"/>
    <property type="match status" value="1"/>
</dbReference>
<dbReference type="SUPFAM" id="SSF55681">
    <property type="entry name" value="Class II aaRS and biotin synthetases"/>
    <property type="match status" value="1"/>
</dbReference>
<dbReference type="PROSITE" id="PS50862">
    <property type="entry name" value="AA_TRNA_LIGASE_II"/>
    <property type="match status" value="1"/>
</dbReference>
<name>SYP_BORBU</name>
<protein>
    <recommendedName>
        <fullName>Proline--tRNA ligase</fullName>
        <ecNumber>6.1.1.15</ecNumber>
    </recommendedName>
    <alternativeName>
        <fullName>Prolyl-tRNA synthetase</fullName>
        <shortName>ProRS</shortName>
    </alternativeName>
</protein>
<sequence>MSDFIASKEDDYSKWYLDIVQKAKLADYSPVKGCMVIMPYGYSIWSKIQSILDKKFKETGHENAYFPMLIPYSFLEREKDHIDGFSPEFAIIKDAGGESLAEPLVLRPTSETIIWNMYSKWIKSYRDLPLKINQWANVVRWEKRTRPFLRTTEFLWQEGHTAHATEEEALEETLLILDVYKRFIEDYLAIPVFCGKKSEKEKFAGAVSTYSIEALMQDKKALQAATSHYLGLNFAKAFDVKFQDKDGKMRHVFASSWGVSTRLIGALIMVHSDEKGLVLPPRIAPIEIIVIPIFKKEDEINKKILDYSDCVVDALKKAEFRVEIDKDVRSSPGFRFSSAEFKGIPIRLEVGINDVLLNSVTISRRDKDRKFKYQISLDSLISKVKVELDLMQKDLFQRALNFRILNTKEIFRSSKDSYETFKAYVNDYSGFVLSCWCGSLNCENIIKNETKATIRCIPDDFKARDLTGMTCIYCSSKAKYFVLFAKSY</sequence>
<gene>
    <name type="primary">proS</name>
    <name type="ordered locus">BB_0402</name>
</gene>
<reference key="1">
    <citation type="journal article" date="1997" name="Nature">
        <title>Genomic sequence of a Lyme disease spirochaete, Borrelia burgdorferi.</title>
        <authorList>
            <person name="Fraser C.M."/>
            <person name="Casjens S."/>
            <person name="Huang W.M."/>
            <person name="Sutton G.G."/>
            <person name="Clayton R.A."/>
            <person name="Lathigra R."/>
            <person name="White O."/>
            <person name="Ketchum K.A."/>
            <person name="Dodson R.J."/>
            <person name="Hickey E.K."/>
            <person name="Gwinn M.L."/>
            <person name="Dougherty B.A."/>
            <person name="Tomb J.-F."/>
            <person name="Fleischmann R.D."/>
            <person name="Richardson D.L."/>
            <person name="Peterson J.D."/>
            <person name="Kerlavage A.R."/>
            <person name="Quackenbush J."/>
            <person name="Salzberg S.L."/>
            <person name="Hanson M."/>
            <person name="van Vugt R."/>
            <person name="Palmer N."/>
            <person name="Adams M.D."/>
            <person name="Gocayne J.D."/>
            <person name="Weidman J.F."/>
            <person name="Utterback T.R."/>
            <person name="Watthey L."/>
            <person name="McDonald L.A."/>
            <person name="Artiach P."/>
            <person name="Bowman C."/>
            <person name="Garland S.A."/>
            <person name="Fujii C."/>
            <person name="Cotton M.D."/>
            <person name="Horst K."/>
            <person name="Roberts K.M."/>
            <person name="Hatch B."/>
            <person name="Smith H.O."/>
            <person name="Venter J.C."/>
        </authorList>
    </citation>
    <scope>NUCLEOTIDE SEQUENCE [LARGE SCALE GENOMIC DNA]</scope>
    <source>
        <strain>ATCC 35210 / DSM 4680 / CIP 102532 / B31</strain>
    </source>
</reference>
<reference key="2">
    <citation type="journal article" date="2002" name="J. Biol. Chem.">
        <title>Cysteine activation is an inherent in vitro property of prolyl-tRNA synthetases.</title>
        <authorList>
            <person name="Ahel I."/>
            <person name="Stathopoulos C."/>
            <person name="Ambrogelly A."/>
            <person name="Sauerwald A."/>
            <person name="Toogood H."/>
            <person name="Hartsch T."/>
            <person name="Soell D."/>
        </authorList>
    </citation>
    <scope>PROLINE AND CYSTEINE ACTIVATION</scope>
    <scope>KINETIC PARAMETERS</scope>
</reference>
<comment type="function">
    <text>Catalyzes the attachment of proline to tRNA(Pro) in a two-step reaction: proline is first activated by ATP to form Pro-AMP and then transferred to the acceptor end of tRNA(Pro). Can inadvertently accommodate and process cysteine.</text>
</comment>
<comment type="catalytic activity">
    <reaction>
        <text>tRNA(Pro) + L-proline + ATP = L-prolyl-tRNA(Pro) + AMP + diphosphate</text>
        <dbReference type="Rhea" id="RHEA:14305"/>
        <dbReference type="Rhea" id="RHEA-COMP:9700"/>
        <dbReference type="Rhea" id="RHEA-COMP:9702"/>
        <dbReference type="ChEBI" id="CHEBI:30616"/>
        <dbReference type="ChEBI" id="CHEBI:33019"/>
        <dbReference type="ChEBI" id="CHEBI:60039"/>
        <dbReference type="ChEBI" id="CHEBI:78442"/>
        <dbReference type="ChEBI" id="CHEBI:78532"/>
        <dbReference type="ChEBI" id="CHEBI:456215"/>
        <dbReference type="EC" id="6.1.1.15"/>
    </reaction>
</comment>
<comment type="biophysicochemical properties">
    <kinetics>
        <KM evidence="2">0.17 mM for proline</KM>
        <KM evidence="2">0.18 mM for cysteine</KM>
    </kinetics>
</comment>
<comment type="subunit">
    <text evidence="1">Homodimer.</text>
</comment>
<comment type="subcellular location">
    <subcellularLocation>
        <location evidence="1">Cytoplasm</location>
    </subcellularLocation>
</comment>
<comment type="domain">
    <text evidence="1">Consists of three domains: the N-terminal catalytic domain, the anticodon-binding domain and the C-terminal extension.</text>
</comment>
<comment type="similarity">
    <text evidence="3">Belongs to the class-II aminoacyl-tRNA synthetase family. ProS type 3 subfamily.</text>
</comment>
<feature type="chain" id="PRO_0000139321" description="Proline--tRNA ligase">
    <location>
        <begin position="1"/>
        <end position="488"/>
    </location>
</feature>
<keyword id="KW-0030">Aminoacyl-tRNA synthetase</keyword>
<keyword id="KW-0067">ATP-binding</keyword>
<keyword id="KW-0963">Cytoplasm</keyword>
<keyword id="KW-0436">Ligase</keyword>
<keyword id="KW-0547">Nucleotide-binding</keyword>
<keyword id="KW-0648">Protein biosynthesis</keyword>
<keyword id="KW-1185">Reference proteome</keyword>
<organism>
    <name type="scientific">Borreliella burgdorferi (strain ATCC 35210 / DSM 4680 / CIP 102532 / B31)</name>
    <name type="common">Borrelia burgdorferi</name>
    <dbReference type="NCBI Taxonomy" id="224326"/>
    <lineage>
        <taxon>Bacteria</taxon>
        <taxon>Pseudomonadati</taxon>
        <taxon>Spirochaetota</taxon>
        <taxon>Spirochaetia</taxon>
        <taxon>Spirochaetales</taxon>
        <taxon>Borreliaceae</taxon>
        <taxon>Borreliella</taxon>
    </lineage>
</organism>